<accession>B1KHU9</accession>
<sequence>MGPTASGKTALAIALVEQHNCEIISVDSALIYRGMDVGSAKPNAEELGKAPHRLIDIRDPAESYSAADFRTDALQAIEEILAKGKTPLLVGGTMMYFKALLEGLSPLPAADDEIRKQIQIEADTYGWNHLHDELKQIDPVSAERIHPNDPQRLSRAIEVYRISGKSLTELTKIKSEPLPYDVVQFAISPKDRKQLHLSIEERFKLMLNQGFVEEVRSLRERSELHIDLPSMRCVGYRQCWQYLNGDYDYDTMVEKAVVATRQLAKRQLTWLRGWPELNWLESGSDSNLTTVLRHCR</sequence>
<proteinExistence type="inferred from homology"/>
<evidence type="ECO:0000255" key="1">
    <source>
        <dbReference type="HAMAP-Rule" id="MF_00185"/>
    </source>
</evidence>
<gene>
    <name evidence="1" type="primary">miaA</name>
    <name type="ordered locus">Swoo_4171</name>
</gene>
<reference key="1">
    <citation type="submission" date="2008-02" db="EMBL/GenBank/DDBJ databases">
        <title>Complete sequence of Shewanella woodyi ATCC 51908.</title>
        <authorList>
            <consortium name="US DOE Joint Genome Institute"/>
            <person name="Copeland A."/>
            <person name="Lucas S."/>
            <person name="Lapidus A."/>
            <person name="Glavina del Rio T."/>
            <person name="Dalin E."/>
            <person name="Tice H."/>
            <person name="Bruce D."/>
            <person name="Goodwin L."/>
            <person name="Pitluck S."/>
            <person name="Sims D."/>
            <person name="Brettin T."/>
            <person name="Detter J.C."/>
            <person name="Han C."/>
            <person name="Kuske C.R."/>
            <person name="Schmutz J."/>
            <person name="Larimer F."/>
            <person name="Land M."/>
            <person name="Hauser L."/>
            <person name="Kyrpides N."/>
            <person name="Lykidis A."/>
            <person name="Zhao J.-S."/>
            <person name="Richardson P."/>
        </authorList>
    </citation>
    <scope>NUCLEOTIDE SEQUENCE [LARGE SCALE GENOMIC DNA]</scope>
    <source>
        <strain>ATCC 51908 / MS32</strain>
    </source>
</reference>
<protein>
    <recommendedName>
        <fullName evidence="1">tRNA dimethylallyltransferase</fullName>
        <ecNumber evidence="1">2.5.1.75</ecNumber>
    </recommendedName>
    <alternativeName>
        <fullName evidence="1">Dimethylallyl diphosphate:tRNA dimethylallyltransferase</fullName>
        <shortName evidence="1">DMAPP:tRNA dimethylallyltransferase</shortName>
        <shortName evidence="1">DMATase</shortName>
    </alternativeName>
    <alternativeName>
        <fullName evidence="1">Isopentenyl-diphosphate:tRNA isopentenyltransferase</fullName>
        <shortName evidence="1">IPP transferase</shortName>
        <shortName evidence="1">IPPT</shortName>
        <shortName evidence="1">IPTase</shortName>
    </alternativeName>
</protein>
<name>MIAA_SHEWM</name>
<organism>
    <name type="scientific">Shewanella woodyi (strain ATCC 51908 / MS32)</name>
    <dbReference type="NCBI Taxonomy" id="392500"/>
    <lineage>
        <taxon>Bacteria</taxon>
        <taxon>Pseudomonadati</taxon>
        <taxon>Pseudomonadota</taxon>
        <taxon>Gammaproteobacteria</taxon>
        <taxon>Alteromonadales</taxon>
        <taxon>Shewanellaceae</taxon>
        <taxon>Shewanella</taxon>
    </lineage>
</organism>
<keyword id="KW-0067">ATP-binding</keyword>
<keyword id="KW-0460">Magnesium</keyword>
<keyword id="KW-0547">Nucleotide-binding</keyword>
<keyword id="KW-1185">Reference proteome</keyword>
<keyword id="KW-0808">Transferase</keyword>
<keyword id="KW-0819">tRNA processing</keyword>
<feature type="chain" id="PRO_0000377322" description="tRNA dimethylallyltransferase">
    <location>
        <begin position="1"/>
        <end position="296"/>
    </location>
</feature>
<feature type="region of interest" description="Interaction with substrate tRNA" evidence="1">
    <location>
        <begin position="27"/>
        <end position="30"/>
    </location>
</feature>
<feature type="region of interest" description="Interaction with substrate tRNA" evidence="1">
    <location>
        <begin position="151"/>
        <end position="155"/>
    </location>
</feature>
<feature type="region of interest" description="Interaction with substrate tRNA" evidence="1">
    <location>
        <begin position="232"/>
        <end position="237"/>
    </location>
</feature>
<feature type="binding site" evidence="1">
    <location>
        <begin position="2"/>
        <end position="9"/>
    </location>
    <ligand>
        <name>ATP</name>
        <dbReference type="ChEBI" id="CHEBI:30616"/>
    </ligand>
</feature>
<feature type="binding site" evidence="1">
    <location>
        <begin position="4"/>
        <end position="9"/>
    </location>
    <ligand>
        <name>substrate</name>
    </ligand>
</feature>
<feature type="site" description="Interaction with substrate tRNA" evidence="1">
    <location>
        <position position="93"/>
    </location>
</feature>
<feature type="site" description="Interaction with substrate tRNA" evidence="1">
    <location>
        <position position="115"/>
    </location>
</feature>
<comment type="function">
    <text evidence="1">Catalyzes the transfer of a dimethylallyl group onto the adenine at position 37 in tRNAs that read codons beginning with uridine, leading to the formation of N6-(dimethylallyl)adenosine (i(6)A).</text>
</comment>
<comment type="catalytic activity">
    <reaction evidence="1">
        <text>adenosine(37) in tRNA + dimethylallyl diphosphate = N(6)-dimethylallyladenosine(37) in tRNA + diphosphate</text>
        <dbReference type="Rhea" id="RHEA:26482"/>
        <dbReference type="Rhea" id="RHEA-COMP:10162"/>
        <dbReference type="Rhea" id="RHEA-COMP:10375"/>
        <dbReference type="ChEBI" id="CHEBI:33019"/>
        <dbReference type="ChEBI" id="CHEBI:57623"/>
        <dbReference type="ChEBI" id="CHEBI:74411"/>
        <dbReference type="ChEBI" id="CHEBI:74415"/>
        <dbReference type="EC" id="2.5.1.75"/>
    </reaction>
</comment>
<comment type="cofactor">
    <cofactor evidence="1">
        <name>Mg(2+)</name>
        <dbReference type="ChEBI" id="CHEBI:18420"/>
    </cofactor>
</comment>
<comment type="subunit">
    <text evidence="1">Monomer.</text>
</comment>
<comment type="similarity">
    <text evidence="1">Belongs to the IPP transferase family.</text>
</comment>
<dbReference type="EC" id="2.5.1.75" evidence="1"/>
<dbReference type="EMBL" id="CP000961">
    <property type="protein sequence ID" value="ACA88427.1"/>
    <property type="molecule type" value="Genomic_DNA"/>
</dbReference>
<dbReference type="RefSeq" id="WP_012326756.1">
    <property type="nucleotide sequence ID" value="NC_010506.1"/>
</dbReference>
<dbReference type="SMR" id="B1KHU9"/>
<dbReference type="STRING" id="392500.Swoo_4171"/>
<dbReference type="KEGG" id="swd:Swoo_4171"/>
<dbReference type="eggNOG" id="COG0324">
    <property type="taxonomic scope" value="Bacteria"/>
</dbReference>
<dbReference type="HOGENOM" id="CLU_032616_0_0_6"/>
<dbReference type="Proteomes" id="UP000002168">
    <property type="component" value="Chromosome"/>
</dbReference>
<dbReference type="GO" id="GO:0005524">
    <property type="term" value="F:ATP binding"/>
    <property type="evidence" value="ECO:0007669"/>
    <property type="project" value="UniProtKB-UniRule"/>
</dbReference>
<dbReference type="GO" id="GO:0052381">
    <property type="term" value="F:tRNA dimethylallyltransferase activity"/>
    <property type="evidence" value="ECO:0007669"/>
    <property type="project" value="UniProtKB-UniRule"/>
</dbReference>
<dbReference type="GO" id="GO:0006400">
    <property type="term" value="P:tRNA modification"/>
    <property type="evidence" value="ECO:0007669"/>
    <property type="project" value="TreeGrafter"/>
</dbReference>
<dbReference type="FunFam" id="1.10.20.140:FF:000001">
    <property type="entry name" value="tRNA dimethylallyltransferase"/>
    <property type="match status" value="1"/>
</dbReference>
<dbReference type="Gene3D" id="1.10.20.140">
    <property type="match status" value="1"/>
</dbReference>
<dbReference type="Gene3D" id="3.40.50.300">
    <property type="entry name" value="P-loop containing nucleotide triphosphate hydrolases"/>
    <property type="match status" value="1"/>
</dbReference>
<dbReference type="HAMAP" id="MF_00185">
    <property type="entry name" value="IPP_trans"/>
    <property type="match status" value="1"/>
</dbReference>
<dbReference type="InterPro" id="IPR039657">
    <property type="entry name" value="Dimethylallyltransferase"/>
</dbReference>
<dbReference type="InterPro" id="IPR018022">
    <property type="entry name" value="IPT"/>
</dbReference>
<dbReference type="InterPro" id="IPR027417">
    <property type="entry name" value="P-loop_NTPase"/>
</dbReference>
<dbReference type="NCBIfam" id="TIGR00174">
    <property type="entry name" value="miaA"/>
    <property type="match status" value="1"/>
</dbReference>
<dbReference type="PANTHER" id="PTHR11088">
    <property type="entry name" value="TRNA DIMETHYLALLYLTRANSFERASE"/>
    <property type="match status" value="1"/>
</dbReference>
<dbReference type="PANTHER" id="PTHR11088:SF60">
    <property type="entry name" value="TRNA DIMETHYLALLYLTRANSFERASE"/>
    <property type="match status" value="1"/>
</dbReference>
<dbReference type="Pfam" id="PF01715">
    <property type="entry name" value="IPPT"/>
    <property type="match status" value="1"/>
</dbReference>
<dbReference type="SUPFAM" id="SSF52540">
    <property type="entry name" value="P-loop containing nucleoside triphosphate hydrolases"/>
    <property type="match status" value="1"/>
</dbReference>